<evidence type="ECO:0000255" key="1">
    <source>
        <dbReference type="HAMAP-Rule" id="MF_00906"/>
    </source>
</evidence>
<evidence type="ECO:0000269" key="2">
    <source>
    </source>
</evidence>
<evidence type="ECO:0000269" key="3">
    <source>
    </source>
</evidence>
<evidence type="ECO:0007829" key="4">
    <source>
        <dbReference type="PDB" id="5E1L"/>
    </source>
</evidence>
<protein>
    <recommendedName>
        <fullName evidence="1">Cell division protein ZapC</fullName>
    </recommendedName>
    <alternativeName>
        <fullName>FtsZ-associated protein C</fullName>
    </alternativeName>
    <alternativeName>
        <fullName>Z-ring-associated protein C</fullName>
    </alternativeName>
</protein>
<reference key="1">
    <citation type="journal article" date="1996" name="DNA Res.">
        <title>A 718-kb DNA sequence of the Escherichia coli K-12 genome corresponding to the 12.7-28.0 min region on the linkage map.</title>
        <authorList>
            <person name="Oshima T."/>
            <person name="Aiba H."/>
            <person name="Baba T."/>
            <person name="Fujita K."/>
            <person name="Hayashi K."/>
            <person name="Honjo A."/>
            <person name="Ikemoto K."/>
            <person name="Inada T."/>
            <person name="Itoh T."/>
            <person name="Kajihara M."/>
            <person name="Kanai K."/>
            <person name="Kashimoto K."/>
            <person name="Kimura S."/>
            <person name="Kitagawa M."/>
            <person name="Makino K."/>
            <person name="Masuda S."/>
            <person name="Miki T."/>
            <person name="Mizobuchi K."/>
            <person name="Mori H."/>
            <person name="Motomura K."/>
            <person name="Nakamura Y."/>
            <person name="Nashimoto H."/>
            <person name="Nishio Y."/>
            <person name="Saito N."/>
            <person name="Sampei G."/>
            <person name="Seki Y."/>
            <person name="Tagami H."/>
            <person name="Takemoto K."/>
            <person name="Wada C."/>
            <person name="Yamamoto Y."/>
            <person name="Yano M."/>
            <person name="Horiuchi T."/>
        </authorList>
    </citation>
    <scope>NUCLEOTIDE SEQUENCE [LARGE SCALE GENOMIC DNA]</scope>
    <source>
        <strain>K12 / W3110 / ATCC 27325 / DSM 5911</strain>
    </source>
</reference>
<reference key="2">
    <citation type="journal article" date="1997" name="Science">
        <title>The complete genome sequence of Escherichia coli K-12.</title>
        <authorList>
            <person name="Blattner F.R."/>
            <person name="Plunkett G. III"/>
            <person name="Bloch C.A."/>
            <person name="Perna N.T."/>
            <person name="Burland V."/>
            <person name="Riley M."/>
            <person name="Collado-Vides J."/>
            <person name="Glasner J.D."/>
            <person name="Rode C.K."/>
            <person name="Mayhew G.F."/>
            <person name="Gregor J."/>
            <person name="Davis N.W."/>
            <person name="Kirkpatrick H.A."/>
            <person name="Goeden M.A."/>
            <person name="Rose D.J."/>
            <person name="Mau B."/>
            <person name="Shao Y."/>
        </authorList>
    </citation>
    <scope>NUCLEOTIDE SEQUENCE [LARGE SCALE GENOMIC DNA]</scope>
    <source>
        <strain>K12 / MG1655 / ATCC 47076</strain>
    </source>
</reference>
<reference key="3">
    <citation type="journal article" date="2006" name="Mol. Syst. Biol.">
        <title>Highly accurate genome sequences of Escherichia coli K-12 strains MG1655 and W3110.</title>
        <authorList>
            <person name="Hayashi K."/>
            <person name="Morooka N."/>
            <person name="Yamamoto Y."/>
            <person name="Fujita K."/>
            <person name="Isono K."/>
            <person name="Choi S."/>
            <person name="Ohtsubo E."/>
            <person name="Baba T."/>
            <person name="Wanner B.L."/>
            <person name="Mori H."/>
            <person name="Horiuchi T."/>
        </authorList>
    </citation>
    <scope>NUCLEOTIDE SEQUENCE [LARGE SCALE GENOMIC DNA]</scope>
    <source>
        <strain>K12 / W3110 / ATCC 27325 / DSM 5911</strain>
    </source>
</reference>
<reference key="4">
    <citation type="journal article" date="2011" name="J. Bacteriol.">
        <title>Identification of Escherichia coli ZapC (YcbW) as a component of the division apparatus that binds and bundles FtsZ polymers.</title>
        <authorList>
            <person name="Hale C.A."/>
            <person name="Shiomi D."/>
            <person name="Liu B."/>
            <person name="Bernhardt T.G."/>
            <person name="Margolin W."/>
            <person name="Niki H."/>
            <person name="de Boer P.A."/>
        </authorList>
    </citation>
    <scope>FUNCTION</scope>
    <scope>SUBUNIT</scope>
    <scope>INTERACTION WITH FTSZ</scope>
    <scope>SUBCELLULAR LOCATION</scope>
    <scope>DISRUPTION PHENOTYPE</scope>
    <scope>MUTAGENESIS OF LEU-22</scope>
    <source>
        <strain>K12 / MG1655 / ATCC 47076</strain>
    </source>
</reference>
<reference key="5">
    <citation type="journal article" date="2011" name="J. Bacteriol.">
        <title>Identification and characterization of ZapC, a stabilizer of the FtsZ ring in Escherichia coli.</title>
        <authorList>
            <person name="Durand-Heredia J.M."/>
            <person name="Yu H.H."/>
            <person name="De Carlo S."/>
            <person name="Lesser C.F."/>
            <person name="Janakiraman A."/>
        </authorList>
    </citation>
    <scope>FUNCTION</scope>
    <scope>SUBUNIT</scope>
    <scope>INTERACTION WITH FTSZ</scope>
    <scope>SUBCELLULAR LOCATION</scope>
    <source>
        <strain>K12 / MC4100 / ATCC 35695 / DSM 6574</strain>
    </source>
</reference>
<sequence>MRIKPDDNWRWYYDEEHDRMMLDLANGMLFRSRFARKMLTPDAFSPAGFCVDDAALYFSFEEKCRDFNLSKEQKAELVLNALVAIRYLKPQMPKSWHFVSHGEMWVPMPGDAACVWLSDTHEQVNLLVVESGENAALCLLAQPCVVIAGRAMQLGDAIKIMNDRLKPQVNVDSFSLEQAV</sequence>
<feature type="chain" id="PRO_0000168778" description="Cell division protein ZapC">
    <location>
        <begin position="1"/>
        <end position="180"/>
    </location>
</feature>
<feature type="mutagenesis site" description="Does not interact with FtsZ, but shows affinity for itself. Reduces GTPase activity by less than 10%." evidence="3">
    <original>L</original>
    <variation>P</variation>
    <location>
        <position position="22"/>
    </location>
</feature>
<feature type="strand" evidence="4">
    <location>
        <begin position="10"/>
        <end position="14"/>
    </location>
</feature>
<feature type="turn" evidence="4">
    <location>
        <begin position="15"/>
        <end position="18"/>
    </location>
</feature>
<feature type="strand" evidence="4">
    <location>
        <begin position="19"/>
        <end position="23"/>
    </location>
</feature>
<feature type="strand" evidence="4">
    <location>
        <begin position="25"/>
        <end position="27"/>
    </location>
</feature>
<feature type="strand" evidence="4">
    <location>
        <begin position="29"/>
        <end position="31"/>
    </location>
</feature>
<feature type="helix" evidence="4">
    <location>
        <begin position="36"/>
        <end position="38"/>
    </location>
</feature>
<feature type="helix" evidence="4">
    <location>
        <begin position="41"/>
        <end position="44"/>
    </location>
</feature>
<feature type="helix" evidence="4">
    <location>
        <begin position="51"/>
        <end position="64"/>
    </location>
</feature>
<feature type="strand" evidence="4">
    <location>
        <begin position="67"/>
        <end position="69"/>
    </location>
</feature>
<feature type="helix" evidence="4">
    <location>
        <begin position="71"/>
        <end position="87"/>
    </location>
</feature>
<feature type="strand" evidence="4">
    <location>
        <begin position="112"/>
        <end position="117"/>
    </location>
</feature>
<feature type="turn" evidence="4">
    <location>
        <begin position="118"/>
        <end position="120"/>
    </location>
</feature>
<feature type="strand" evidence="4">
    <location>
        <begin position="123"/>
        <end position="131"/>
    </location>
</feature>
<feature type="strand" evidence="4">
    <location>
        <begin position="133"/>
        <end position="140"/>
    </location>
</feature>
<feature type="strand" evidence="4">
    <location>
        <begin position="142"/>
        <end position="147"/>
    </location>
</feature>
<feature type="strand" evidence="4">
    <location>
        <begin position="150"/>
        <end position="153"/>
    </location>
</feature>
<feature type="strand" evidence="4">
    <location>
        <begin position="157"/>
        <end position="161"/>
    </location>
</feature>
<feature type="helix" evidence="4">
    <location>
        <begin position="162"/>
        <end position="164"/>
    </location>
</feature>
<organism>
    <name type="scientific">Escherichia coli (strain K12)</name>
    <dbReference type="NCBI Taxonomy" id="83333"/>
    <lineage>
        <taxon>Bacteria</taxon>
        <taxon>Pseudomonadati</taxon>
        <taxon>Pseudomonadota</taxon>
        <taxon>Gammaproteobacteria</taxon>
        <taxon>Enterobacterales</taxon>
        <taxon>Enterobacteriaceae</taxon>
        <taxon>Escherichia</taxon>
    </lineage>
</organism>
<accession>P75862</accession>
<name>ZAPC_ECOLI</name>
<keyword id="KW-0002">3D-structure</keyword>
<keyword id="KW-0131">Cell cycle</keyword>
<keyword id="KW-0132">Cell division</keyword>
<keyword id="KW-0963">Cytoplasm</keyword>
<keyword id="KW-1185">Reference proteome</keyword>
<keyword id="KW-0717">Septation</keyword>
<comment type="function">
    <text evidence="1 2 3">Contributes to the efficiency of the cell division process by stabilizing the polymeric form of the cell division protein FtsZ. Acts by promoting interactions between FtsZ protofilaments and suppressing the GTPase activity of FtsZ.</text>
</comment>
<comment type="subunit">
    <text evidence="1 2 3">Interacts directly with FtsZ. Monomer in solution.</text>
</comment>
<comment type="interaction">
    <interactant intactId="EBI-552519">
        <id>P75862</id>
    </interactant>
    <interactant intactId="EBI-370963">
        <id>P0A9A6</id>
        <label>ftsZ</label>
    </interactant>
    <organismsDiffer>false</organismsDiffer>
    <experiments>5</experiments>
</comment>
<comment type="interaction">
    <interactant intactId="EBI-552519">
        <id>P75862</id>
    </interactant>
    <interactant intactId="EBI-369221">
        <id>P0A6Z3</id>
        <label>htpG</label>
    </interactant>
    <organismsDiffer>false</organismsDiffer>
    <experiments>3</experiments>
</comment>
<comment type="interaction">
    <interactant intactId="EBI-552519">
        <id>P75862</id>
    </interactant>
    <interactant intactId="EBI-552519">
        <id>P75862</id>
        <label>zapC</label>
    </interactant>
    <organismsDiffer>false</organismsDiffer>
    <experiments>3</experiments>
</comment>
<comment type="subcellular location">
    <subcellularLocation>
        <location evidence="1 2 3">Cytoplasm</location>
    </subcellularLocation>
    <text>Colocalizes with FtsZ at division sites. Localization to the Z ring is dependent on FtsZ and independent of FtsA, ZipA, ZapA or ZapB.</text>
</comment>
<comment type="disruption phenotype">
    <text evidence="3">Mutants divide almost normally under standard growth conditions.</text>
</comment>
<comment type="similarity">
    <text evidence="1">Belongs to the ZapC family.</text>
</comment>
<dbReference type="EMBL" id="U00096">
    <property type="protein sequence ID" value="AAC74032.2"/>
    <property type="molecule type" value="Genomic_DNA"/>
</dbReference>
<dbReference type="EMBL" id="AP009048">
    <property type="protein sequence ID" value="BAA35701.2"/>
    <property type="molecule type" value="Genomic_DNA"/>
</dbReference>
<dbReference type="PIR" id="A64835">
    <property type="entry name" value="A64835"/>
</dbReference>
<dbReference type="RefSeq" id="NP_415466.4">
    <property type="nucleotide sequence ID" value="NC_000913.3"/>
</dbReference>
<dbReference type="RefSeq" id="WP_001295353.1">
    <property type="nucleotide sequence ID" value="NZ_SSZK01000002.1"/>
</dbReference>
<dbReference type="PDB" id="5E1L">
    <property type="method" value="X-ray"/>
    <property type="resolution" value="2.15 A"/>
    <property type="chains" value="A=1-180"/>
</dbReference>
<dbReference type="PDB" id="5FO3">
    <property type="method" value="X-ray"/>
    <property type="resolution" value="2.90 A"/>
    <property type="chains" value="A/B=1-180"/>
</dbReference>
<dbReference type="PDBsum" id="5E1L"/>
<dbReference type="PDBsum" id="5FO3"/>
<dbReference type="SMR" id="P75862"/>
<dbReference type="BioGRID" id="4259444">
    <property type="interactions" value="9"/>
</dbReference>
<dbReference type="BioGRID" id="849926">
    <property type="interactions" value="21"/>
</dbReference>
<dbReference type="DIP" id="DIP-11485N"/>
<dbReference type="FunCoup" id="P75862">
    <property type="interactions" value="67"/>
</dbReference>
<dbReference type="IntAct" id="P75862">
    <property type="interactions" value="22"/>
</dbReference>
<dbReference type="MINT" id="P75862"/>
<dbReference type="STRING" id="511145.b0946"/>
<dbReference type="PaxDb" id="511145-b0946"/>
<dbReference type="EnsemblBacteria" id="AAC74032">
    <property type="protein sequence ID" value="AAC74032"/>
    <property type="gene ID" value="b0946"/>
</dbReference>
<dbReference type="GeneID" id="93776468"/>
<dbReference type="GeneID" id="945552"/>
<dbReference type="KEGG" id="ecj:JW5125"/>
<dbReference type="KEGG" id="eco:b0946"/>
<dbReference type="KEGG" id="ecoc:C3026_05795"/>
<dbReference type="PATRIC" id="fig|1411691.4.peg.1328"/>
<dbReference type="EchoBASE" id="EB3479"/>
<dbReference type="eggNOG" id="ENOG502Z8AH">
    <property type="taxonomic scope" value="Bacteria"/>
</dbReference>
<dbReference type="HOGENOM" id="CLU_128248_0_0_6"/>
<dbReference type="InParanoid" id="P75862"/>
<dbReference type="OMA" id="IKVMNDR"/>
<dbReference type="OrthoDB" id="5765005at2"/>
<dbReference type="PhylomeDB" id="P75862"/>
<dbReference type="BioCyc" id="EcoCyc:G6486-MONOMER"/>
<dbReference type="EvolutionaryTrace" id="P75862"/>
<dbReference type="PRO" id="PR:P75862"/>
<dbReference type="Proteomes" id="UP000000625">
    <property type="component" value="Chromosome"/>
</dbReference>
<dbReference type="GO" id="GO:0032153">
    <property type="term" value="C:cell division site"/>
    <property type="evidence" value="ECO:0000314"/>
    <property type="project" value="EcoCyc"/>
</dbReference>
<dbReference type="GO" id="GO:0005737">
    <property type="term" value="C:cytoplasm"/>
    <property type="evidence" value="ECO:0007669"/>
    <property type="project" value="UniProtKB-SubCell"/>
</dbReference>
<dbReference type="GO" id="GO:0042802">
    <property type="term" value="F:identical protein binding"/>
    <property type="evidence" value="ECO:0000353"/>
    <property type="project" value="IntAct"/>
</dbReference>
<dbReference type="GO" id="GO:0000917">
    <property type="term" value="P:division septum assembly"/>
    <property type="evidence" value="ECO:0007669"/>
    <property type="project" value="UniProtKB-KW"/>
</dbReference>
<dbReference type="GO" id="GO:0043093">
    <property type="term" value="P:FtsZ-dependent cytokinesis"/>
    <property type="evidence" value="ECO:0000269"/>
    <property type="project" value="EcoCyc"/>
</dbReference>
<dbReference type="GO" id="GO:0051302">
    <property type="term" value="P:regulation of cell division"/>
    <property type="evidence" value="ECO:0000315"/>
    <property type="project" value="EcoliWiki"/>
</dbReference>
<dbReference type="HAMAP" id="MF_00906">
    <property type="entry name" value="ZapC"/>
    <property type="match status" value="1"/>
</dbReference>
<dbReference type="InterPro" id="IPR009809">
    <property type="entry name" value="ZapC"/>
</dbReference>
<dbReference type="InterPro" id="IPR048372">
    <property type="entry name" value="ZapC_C"/>
</dbReference>
<dbReference type="InterPro" id="IPR048373">
    <property type="entry name" value="ZapC_N"/>
</dbReference>
<dbReference type="Pfam" id="PF07126">
    <property type="entry name" value="ZapC_C"/>
    <property type="match status" value="1"/>
</dbReference>
<dbReference type="Pfam" id="PF21083">
    <property type="entry name" value="ZapC_N"/>
    <property type="match status" value="1"/>
</dbReference>
<dbReference type="PIRSF" id="PIRSF010252">
    <property type="entry name" value="ZapC"/>
    <property type="match status" value="1"/>
</dbReference>
<gene>
    <name evidence="1" type="primary">zapC</name>
    <name type="synonym">ycbW</name>
    <name type="ordered locus">b0946</name>
    <name type="ordered locus">JW5125</name>
</gene>
<proteinExistence type="evidence at protein level"/>